<evidence type="ECO:0000256" key="1">
    <source>
        <dbReference type="SAM" id="MobiDB-lite"/>
    </source>
</evidence>
<evidence type="ECO:0000305" key="2"/>
<dbReference type="EMBL" id="AE005674">
    <property type="protein sequence ID" value="AAN45400.2"/>
    <property type="molecule type" value="Genomic_DNA"/>
</dbReference>
<dbReference type="EMBL" id="AE014073">
    <property type="protein sequence ID" value="AAP18800.1"/>
    <property type="molecule type" value="Genomic_DNA"/>
</dbReference>
<dbReference type="RefSeq" id="NP_709693.2">
    <property type="nucleotide sequence ID" value="NC_004337.2"/>
</dbReference>
<dbReference type="RefSeq" id="WP_001295676.1">
    <property type="nucleotide sequence ID" value="NZ_WPGW01000130.1"/>
</dbReference>
<dbReference type="SMR" id="P0ADQ6"/>
<dbReference type="STRING" id="198214.SF3965"/>
<dbReference type="PaxDb" id="198214-SF3965"/>
<dbReference type="GeneID" id="1027773"/>
<dbReference type="KEGG" id="sfl:SF3965"/>
<dbReference type="KEGG" id="sfx:S3783"/>
<dbReference type="PATRIC" id="fig|198214.7.peg.4672"/>
<dbReference type="HOGENOM" id="CLU_182089_1_0_6"/>
<dbReference type="Proteomes" id="UP000001006">
    <property type="component" value="Chromosome"/>
</dbReference>
<dbReference type="Proteomes" id="UP000002673">
    <property type="component" value="Chromosome"/>
</dbReference>
<dbReference type="GO" id="GO:0043565">
    <property type="term" value="F:sequence-specific DNA binding"/>
    <property type="evidence" value="ECO:0007669"/>
    <property type="project" value="UniProtKB-ARBA"/>
</dbReference>
<dbReference type="GO" id="GO:0006355">
    <property type="term" value="P:regulation of DNA-templated transcription"/>
    <property type="evidence" value="ECO:0007669"/>
    <property type="project" value="InterPro"/>
</dbReference>
<dbReference type="CDD" id="cd21631">
    <property type="entry name" value="RHH_CopG_NikR-like"/>
    <property type="match status" value="1"/>
</dbReference>
<dbReference type="Gene3D" id="1.10.1220.10">
    <property type="entry name" value="Met repressor-like"/>
    <property type="match status" value="1"/>
</dbReference>
<dbReference type="InterPro" id="IPR013321">
    <property type="entry name" value="Arc_rbn_hlx_hlx"/>
</dbReference>
<dbReference type="InterPro" id="IPR002145">
    <property type="entry name" value="CopG"/>
</dbReference>
<dbReference type="Pfam" id="PF01402">
    <property type="entry name" value="RHH_1"/>
    <property type="match status" value="1"/>
</dbReference>
<protein>
    <recommendedName>
        <fullName>Uncharacterized protein YiiE</fullName>
    </recommendedName>
</protein>
<name>YIIE_SHIFL</name>
<proteinExistence type="inferred from homology"/>
<keyword id="KW-1185">Reference proteome</keyword>
<organism>
    <name type="scientific">Shigella flexneri</name>
    <dbReference type="NCBI Taxonomy" id="623"/>
    <lineage>
        <taxon>Bacteria</taxon>
        <taxon>Pseudomonadati</taxon>
        <taxon>Pseudomonadota</taxon>
        <taxon>Gammaproteobacteria</taxon>
        <taxon>Enterobacterales</taxon>
        <taxon>Enterobacteriaceae</taxon>
        <taxon>Shigella</taxon>
    </lineage>
</organism>
<accession>P0ADQ6</accession>
<accession>P32149</accession>
<feature type="chain" id="PRO_0000169683" description="Uncharacterized protein YiiE">
    <location>
        <begin position="1"/>
        <end position="72"/>
    </location>
</feature>
<feature type="region of interest" description="Disordered" evidence="1">
    <location>
        <begin position="51"/>
        <end position="72"/>
    </location>
</feature>
<comment type="similarity">
    <text evidence="2">Belongs to the YiiE family.</text>
</comment>
<gene>
    <name type="primary">yiiE</name>
    <name type="ordered locus">SF3965</name>
    <name type="ordered locus">S3783</name>
</gene>
<reference key="1">
    <citation type="journal article" date="2002" name="Nucleic Acids Res.">
        <title>Genome sequence of Shigella flexneri 2a: insights into pathogenicity through comparison with genomes of Escherichia coli K12 and O157.</title>
        <authorList>
            <person name="Jin Q."/>
            <person name="Yuan Z."/>
            <person name="Xu J."/>
            <person name="Wang Y."/>
            <person name="Shen Y."/>
            <person name="Lu W."/>
            <person name="Wang J."/>
            <person name="Liu H."/>
            <person name="Yang J."/>
            <person name="Yang F."/>
            <person name="Zhang X."/>
            <person name="Zhang J."/>
            <person name="Yang G."/>
            <person name="Wu H."/>
            <person name="Qu D."/>
            <person name="Dong J."/>
            <person name="Sun L."/>
            <person name="Xue Y."/>
            <person name="Zhao A."/>
            <person name="Gao Y."/>
            <person name="Zhu J."/>
            <person name="Kan B."/>
            <person name="Ding K."/>
            <person name="Chen S."/>
            <person name="Cheng H."/>
            <person name="Yao Z."/>
            <person name="He B."/>
            <person name="Chen R."/>
            <person name="Ma D."/>
            <person name="Qiang B."/>
            <person name="Wen Y."/>
            <person name="Hou Y."/>
            <person name="Yu J."/>
        </authorList>
    </citation>
    <scope>NUCLEOTIDE SEQUENCE [LARGE SCALE GENOMIC DNA]</scope>
    <source>
        <strain>301 / Serotype 2a</strain>
    </source>
</reference>
<reference key="2">
    <citation type="journal article" date="2003" name="Infect. Immun.">
        <title>Complete genome sequence and comparative genomics of Shigella flexneri serotype 2a strain 2457T.</title>
        <authorList>
            <person name="Wei J."/>
            <person name="Goldberg M.B."/>
            <person name="Burland V."/>
            <person name="Venkatesan M.M."/>
            <person name="Deng W."/>
            <person name="Fournier G."/>
            <person name="Mayhew G.F."/>
            <person name="Plunkett G. III"/>
            <person name="Rose D.J."/>
            <person name="Darling A."/>
            <person name="Mau B."/>
            <person name="Perna N.T."/>
            <person name="Payne S.M."/>
            <person name="Runyen-Janecky L.J."/>
            <person name="Zhou S."/>
            <person name="Schwartz D.C."/>
            <person name="Blattner F.R."/>
        </authorList>
    </citation>
    <scope>NUCLEOTIDE SEQUENCE [LARGE SCALE GENOMIC DNA]</scope>
    <source>
        <strain>ATCC 700930 / 2457T / Serotype 2a</strain>
    </source>
</reference>
<sequence length="72" mass="8408">MAMNTVFLHLSEEAIKRLNKLRGWRKVSRSAILREAVEQYLERQQFPVRKAKGGRQKGEVVGVDDQCKEHKE</sequence>